<sequence length="303" mass="34414">MISASALNSELINKIAQDFAQATGLAVVVVNIHGDEISELFNFTPFCQLMRQHPQHSTRCRMSDRCGGLEASKSDQPCIYRCHAGLTDFSIPLVIAGHLVGFVLCGQVRLSNDVELVNILNVDDRWQADPELLNEFRNVPEMDYSRVIASADLLKLIVENCLKKQLNFVVIKDNPQQSEANKTTRGPTPHDSKMKKALRYIDAHLSDDLRLEDVASHVYLSPYYFSKLFKKYQGIGFNAWVNRQRMVSARELLCHSDWSIASIARNLGFSQTSYFCKVFRQTYQVTPQAYRQQINENSHPPSL</sequence>
<keyword id="KW-0010">Activator</keyword>
<keyword id="KW-0169">Cobalamin biosynthesis</keyword>
<keyword id="KW-0238">DNA-binding</keyword>
<keyword id="KW-0319">Glycerol metabolism</keyword>
<keyword id="KW-1185">Reference proteome</keyword>
<keyword id="KW-0804">Transcription</keyword>
<keyword id="KW-0805">Transcription regulation</keyword>
<organism>
    <name type="scientific">Salmonella typhimurium (strain LT2 / SGSC1412 / ATCC 700720)</name>
    <dbReference type="NCBI Taxonomy" id="99287"/>
    <lineage>
        <taxon>Bacteria</taxon>
        <taxon>Pseudomonadati</taxon>
        <taxon>Pseudomonadota</taxon>
        <taxon>Gammaproteobacteria</taxon>
        <taxon>Enterobacterales</taxon>
        <taxon>Enterobacteriaceae</taxon>
        <taxon>Salmonella</taxon>
    </lineage>
</organism>
<evidence type="ECO:0000255" key="1">
    <source>
        <dbReference type="PROSITE-ProRule" id="PRU00593"/>
    </source>
</evidence>
<evidence type="ECO:0000269" key="2">
    <source>
    </source>
</evidence>
<evidence type="ECO:0000269" key="3">
    <source>
    </source>
</evidence>
<evidence type="ECO:0000269" key="4">
    <source>
    </source>
</evidence>
<gene>
    <name type="primary">pocR</name>
    <name type="ordered locus">STM2036</name>
</gene>
<comment type="function">
    <text evidence="2 3 4">Positive regulatory protein of pdu and cob operons (PubMed:7559322, PubMed:8071226, PubMed:9023178). Positively autoregulates its own expression (PubMed:7559322).</text>
</comment>
<comment type="pathway">
    <text>Cofactor biosynthesis; adenosylcobalamin biosynthesis [regulation].</text>
</comment>
<comment type="pathway">
    <text evidence="2 4">Polyol metabolism; 1,2-propanediol degradation [regulation].</text>
</comment>
<comment type="disruption phenotype">
    <text evidence="2 3 4">Increases expression of the entire cob operon about 90-fold irrespective of the growth medium; expression retains its sensitivity to vitamin B12 repression (PubMed:8071226). Cells lacking this gene are defective in aerobic and anaerobic degradation of propanediol (PubMed:7559322, PubMed:9023178).</text>
</comment>
<dbReference type="EMBL" id="AF026270">
    <property type="protein sequence ID" value="AAB84109.1"/>
    <property type="molecule type" value="Genomic_DNA"/>
</dbReference>
<dbReference type="EMBL" id="AE006468">
    <property type="protein sequence ID" value="AAL20940.1"/>
    <property type="molecule type" value="Genomic_DNA"/>
</dbReference>
<dbReference type="EMBL" id="L12006">
    <property type="protein sequence ID" value="AAA27251.1"/>
    <property type="molecule type" value="Genomic_DNA"/>
</dbReference>
<dbReference type="RefSeq" id="NP_460981.1">
    <property type="nucleotide sequence ID" value="NC_003197.2"/>
</dbReference>
<dbReference type="RefSeq" id="WP_000622326.1">
    <property type="nucleotide sequence ID" value="NC_003197.2"/>
</dbReference>
<dbReference type="SMR" id="Q05587"/>
<dbReference type="STRING" id="99287.STM2036"/>
<dbReference type="PaxDb" id="99287-STM2036"/>
<dbReference type="GeneID" id="1253557"/>
<dbReference type="KEGG" id="stm:STM2036"/>
<dbReference type="PATRIC" id="fig|99287.12.peg.2158"/>
<dbReference type="HOGENOM" id="CLU_036605_0_1_6"/>
<dbReference type="OMA" id="YEGVTPF"/>
<dbReference type="PhylomeDB" id="Q05587"/>
<dbReference type="BioCyc" id="SENT99287:STM2036-MONOMER"/>
<dbReference type="UniPathway" id="UPA00148"/>
<dbReference type="UniPathway" id="UPA00621"/>
<dbReference type="Proteomes" id="UP000001014">
    <property type="component" value="Chromosome"/>
</dbReference>
<dbReference type="GO" id="GO:0003700">
    <property type="term" value="F:DNA-binding transcription factor activity"/>
    <property type="evidence" value="ECO:0007669"/>
    <property type="project" value="InterPro"/>
</dbReference>
<dbReference type="GO" id="GO:0043565">
    <property type="term" value="F:sequence-specific DNA binding"/>
    <property type="evidence" value="ECO:0007669"/>
    <property type="project" value="InterPro"/>
</dbReference>
<dbReference type="GO" id="GO:0009236">
    <property type="term" value="P:cobalamin biosynthetic process"/>
    <property type="evidence" value="ECO:0007669"/>
    <property type="project" value="UniProtKB-UniPathway"/>
</dbReference>
<dbReference type="GO" id="GO:0006071">
    <property type="term" value="P:glycerol metabolic process"/>
    <property type="evidence" value="ECO:0007669"/>
    <property type="project" value="UniProtKB-KW"/>
</dbReference>
<dbReference type="GO" id="GO:0051144">
    <property type="term" value="P:propanediol catabolic process"/>
    <property type="evidence" value="ECO:0007669"/>
    <property type="project" value="UniProtKB-UniPathway"/>
</dbReference>
<dbReference type="Gene3D" id="1.10.10.60">
    <property type="entry name" value="Homeodomain-like"/>
    <property type="match status" value="2"/>
</dbReference>
<dbReference type="InterPro" id="IPR009057">
    <property type="entry name" value="Homeodomain-like_sf"/>
</dbReference>
<dbReference type="InterPro" id="IPR018060">
    <property type="entry name" value="HTH_AraC"/>
</dbReference>
<dbReference type="InterPro" id="IPR018062">
    <property type="entry name" value="HTH_AraC-typ_CS"/>
</dbReference>
<dbReference type="InterPro" id="IPR018771">
    <property type="entry name" value="PocR_dom"/>
</dbReference>
<dbReference type="InterPro" id="IPR020449">
    <property type="entry name" value="Tscrpt_reg_AraC-type_HTH"/>
</dbReference>
<dbReference type="NCBIfam" id="NF047788">
    <property type="entry name" value="TransRegPocR"/>
    <property type="match status" value="1"/>
</dbReference>
<dbReference type="PANTHER" id="PTHR43280">
    <property type="entry name" value="ARAC-FAMILY TRANSCRIPTIONAL REGULATOR"/>
    <property type="match status" value="1"/>
</dbReference>
<dbReference type="PANTHER" id="PTHR43280:SF10">
    <property type="entry name" value="REGULATORY PROTEIN POCR"/>
    <property type="match status" value="1"/>
</dbReference>
<dbReference type="Pfam" id="PF12833">
    <property type="entry name" value="HTH_18"/>
    <property type="match status" value="1"/>
</dbReference>
<dbReference type="Pfam" id="PF10114">
    <property type="entry name" value="PocR"/>
    <property type="match status" value="1"/>
</dbReference>
<dbReference type="PRINTS" id="PR00032">
    <property type="entry name" value="HTHARAC"/>
</dbReference>
<dbReference type="SMART" id="SM00342">
    <property type="entry name" value="HTH_ARAC"/>
    <property type="match status" value="1"/>
</dbReference>
<dbReference type="SUPFAM" id="SSF46689">
    <property type="entry name" value="Homeodomain-like"/>
    <property type="match status" value="2"/>
</dbReference>
<dbReference type="PROSITE" id="PS00041">
    <property type="entry name" value="HTH_ARAC_FAMILY_1"/>
    <property type="match status" value="1"/>
</dbReference>
<dbReference type="PROSITE" id="PS01124">
    <property type="entry name" value="HTH_ARAC_FAMILY_2"/>
    <property type="match status" value="1"/>
</dbReference>
<protein>
    <recommendedName>
        <fullName>Regulatory protein PocR</fullName>
    </recommendedName>
</protein>
<reference key="1">
    <citation type="journal article" date="1994" name="J. Bacteriol.">
        <title>The control region of the pdu/cob regulon in Salmonella typhimurium.</title>
        <authorList>
            <person name="Chen P."/>
            <person name="Anderson D.I."/>
            <person name="Roth J.R."/>
        </authorList>
    </citation>
    <scope>NUCLEOTIDE SEQUENCE [GENOMIC DNA]</scope>
    <scope>FUNCTION</scope>
    <scope>DISRUPTION PHENOTYPE</scope>
    <source>
        <strain>LT2</strain>
    </source>
</reference>
<reference key="2">
    <citation type="journal article" date="1997" name="J. Bacteriol.">
        <title>Propanediol utilization genes (pdu) of Salmonella typhimurium: three genes for the propanediol dehydratase.</title>
        <authorList>
            <person name="Bobik T.A."/>
            <person name="Xu Y."/>
            <person name="Jeter R.M."/>
            <person name="Otto K.E."/>
            <person name="Roth J.R."/>
        </authorList>
    </citation>
    <scope>NUCLEOTIDE SEQUENCE [GENOMIC DNA]</scope>
    <source>
        <strain>LT2</strain>
    </source>
</reference>
<reference key="3">
    <citation type="journal article" date="2001" name="Nature">
        <title>Complete genome sequence of Salmonella enterica serovar Typhimurium LT2.</title>
        <authorList>
            <person name="McClelland M."/>
            <person name="Sanderson K.E."/>
            <person name="Spieth J."/>
            <person name="Clifton S.W."/>
            <person name="Latreille P."/>
            <person name="Courtney L."/>
            <person name="Porwollik S."/>
            <person name="Ali J."/>
            <person name="Dante M."/>
            <person name="Du F."/>
            <person name="Hou S."/>
            <person name="Layman D."/>
            <person name="Leonard S."/>
            <person name="Nguyen C."/>
            <person name="Scott K."/>
            <person name="Holmes A."/>
            <person name="Grewal N."/>
            <person name="Mulvaney E."/>
            <person name="Ryan E."/>
            <person name="Sun H."/>
            <person name="Florea L."/>
            <person name="Miller W."/>
            <person name="Stoneking T."/>
            <person name="Nhan M."/>
            <person name="Waterston R."/>
            <person name="Wilson R.K."/>
        </authorList>
    </citation>
    <scope>NUCLEOTIDE SEQUENCE [LARGE SCALE GENOMIC DNA]</scope>
    <source>
        <strain>LT2 / SGSC1412 / ATCC 700720</strain>
    </source>
</reference>
<reference key="4">
    <citation type="journal article" date="1993" name="J. Bacteriol.">
        <title>Characterization of the cobalamin (vitamin B12) biosynthetic genes of Salmonella typhimurium.</title>
        <authorList>
            <person name="Roth J.R."/>
            <person name="Lawrence J.G."/>
            <person name="Rubenfield M."/>
            <person name="Kieffer-Higgins S."/>
            <person name="Church G.M."/>
        </authorList>
    </citation>
    <scope>NUCLEOTIDE SEQUENCE [GENOMIC DNA] OF 75-303</scope>
    <source>
        <strain>LT2</strain>
    </source>
</reference>
<reference key="5">
    <citation type="journal article" date="1995" name="J. Bacteriol.">
        <title>Five promoters integrate control of the cob/pdu regulon in Salmonella typhimurium.</title>
        <authorList>
            <person name="Chen P."/>
            <person name="Ailion M."/>
            <person name="Bobik T."/>
            <person name="Stormo G."/>
            <person name="Roth J."/>
        </authorList>
    </citation>
    <scope>FUNCTION</scope>
    <scope>PATHWAY</scope>
    <scope>INDUCTION</scope>
    <scope>DISRUPTION PHENOTYPE</scope>
    <source>
        <strain>LT2</strain>
    </source>
</reference>
<reference key="6">
    <citation type="journal article" date="1997" name="J. Bacteriol.">
        <title>Genetic characterization of the pdu operon: use of 1,2-propanediol in Salmonella typhimurium.</title>
        <authorList>
            <person name="Walter D."/>
            <person name="Ailion M."/>
            <person name="Roth J."/>
        </authorList>
    </citation>
    <scope>FUNCTION IN PROPANEDIOL UTILIZATION</scope>
    <scope>PATHWAY</scope>
    <scope>DISRUPTION PHENOTYPE</scope>
    <source>
        <strain>LT2</strain>
    </source>
</reference>
<accession>Q05587</accession>
<proteinExistence type="evidence at protein level"/>
<name>POCR_SALTY</name>
<feature type="chain" id="PRO_0000194546" description="Regulatory protein PocR">
    <location>
        <begin position="1"/>
        <end position="303"/>
    </location>
</feature>
<feature type="domain" description="HTH araC/xylS-type" evidence="1">
    <location>
        <begin position="195"/>
        <end position="293"/>
    </location>
</feature>
<feature type="DNA-binding region" description="H-T-H motif" evidence="1">
    <location>
        <begin position="212"/>
        <end position="233"/>
    </location>
</feature>
<feature type="DNA-binding region" description="H-T-H motif" evidence="1">
    <location>
        <begin position="260"/>
        <end position="283"/>
    </location>
</feature>